<sequence length="169" mass="19350">MPPTRDPFQQPTLDNDDSYLGELRASKKLPYKNPTHLAQQQEPWSRLNSTPTITSMRRDAYYFDPEIPKDDLDFRLAALYNHHTGTFKNKSEILLNQKTTQDTYRTKIQFPGEFLTPPTPPITFLANIRHWINPKKESIHSIQGSIVSPHTAATNGGYSRKKDGGFFST</sequence>
<organism>
    <name type="scientific">Homo sapiens</name>
    <name type="common">Human</name>
    <dbReference type="NCBI Taxonomy" id="9606"/>
    <lineage>
        <taxon>Eukaryota</taxon>
        <taxon>Metazoa</taxon>
        <taxon>Chordata</taxon>
        <taxon>Craniata</taxon>
        <taxon>Vertebrata</taxon>
        <taxon>Euteleostomi</taxon>
        <taxon>Mammalia</taxon>
        <taxon>Eutheria</taxon>
        <taxon>Euarchontoglires</taxon>
        <taxon>Primates</taxon>
        <taxon>Haplorrhini</taxon>
        <taxon>Catarrhini</taxon>
        <taxon>Hominidae</taxon>
        <taxon>Homo</taxon>
    </lineage>
</organism>
<protein>
    <recommendedName>
        <fullName evidence="7">Cilia- and flagella-associated protein 276</fullName>
    </recommendedName>
</protein>
<reference key="1">
    <citation type="journal article" date="1996" name="Genome Res.">
        <title>Normalization and subtraction: two approaches to facilitate gene discovery.</title>
        <authorList>
            <person name="Bonaldo M.F."/>
            <person name="Lennon G."/>
            <person name="Soares M.B."/>
        </authorList>
    </citation>
    <scope>NUCLEOTIDE SEQUENCE [LARGE SCALE MRNA] (ISOFORM 2)</scope>
</reference>
<reference key="2">
    <citation type="journal article" date="2006" name="Nature">
        <title>The DNA sequence and biological annotation of human chromosome 1.</title>
        <authorList>
            <person name="Gregory S.G."/>
            <person name="Barlow K.F."/>
            <person name="McLay K.E."/>
            <person name="Kaul R."/>
            <person name="Swarbreck D."/>
            <person name="Dunham A."/>
            <person name="Scott C.E."/>
            <person name="Howe K.L."/>
            <person name="Woodfine K."/>
            <person name="Spencer C.C.A."/>
            <person name="Jones M.C."/>
            <person name="Gillson C."/>
            <person name="Searle S."/>
            <person name="Zhou Y."/>
            <person name="Kokocinski F."/>
            <person name="McDonald L."/>
            <person name="Evans R."/>
            <person name="Phillips K."/>
            <person name="Atkinson A."/>
            <person name="Cooper R."/>
            <person name="Jones C."/>
            <person name="Hall R.E."/>
            <person name="Andrews T.D."/>
            <person name="Lloyd C."/>
            <person name="Ainscough R."/>
            <person name="Almeida J.P."/>
            <person name="Ambrose K.D."/>
            <person name="Anderson F."/>
            <person name="Andrew R.W."/>
            <person name="Ashwell R.I.S."/>
            <person name="Aubin K."/>
            <person name="Babbage A.K."/>
            <person name="Bagguley C.L."/>
            <person name="Bailey J."/>
            <person name="Beasley H."/>
            <person name="Bethel G."/>
            <person name="Bird C.P."/>
            <person name="Bray-Allen S."/>
            <person name="Brown J.Y."/>
            <person name="Brown A.J."/>
            <person name="Buckley D."/>
            <person name="Burton J."/>
            <person name="Bye J."/>
            <person name="Carder C."/>
            <person name="Chapman J.C."/>
            <person name="Clark S.Y."/>
            <person name="Clarke G."/>
            <person name="Clee C."/>
            <person name="Cobley V."/>
            <person name="Collier R.E."/>
            <person name="Corby N."/>
            <person name="Coville G.J."/>
            <person name="Davies J."/>
            <person name="Deadman R."/>
            <person name="Dunn M."/>
            <person name="Earthrowl M."/>
            <person name="Ellington A.G."/>
            <person name="Errington H."/>
            <person name="Frankish A."/>
            <person name="Frankland J."/>
            <person name="French L."/>
            <person name="Garner P."/>
            <person name="Garnett J."/>
            <person name="Gay L."/>
            <person name="Ghori M.R.J."/>
            <person name="Gibson R."/>
            <person name="Gilby L.M."/>
            <person name="Gillett W."/>
            <person name="Glithero R.J."/>
            <person name="Grafham D.V."/>
            <person name="Griffiths C."/>
            <person name="Griffiths-Jones S."/>
            <person name="Grocock R."/>
            <person name="Hammond S."/>
            <person name="Harrison E.S.I."/>
            <person name="Hart E."/>
            <person name="Haugen E."/>
            <person name="Heath P.D."/>
            <person name="Holmes S."/>
            <person name="Holt K."/>
            <person name="Howden P.J."/>
            <person name="Hunt A.R."/>
            <person name="Hunt S.E."/>
            <person name="Hunter G."/>
            <person name="Isherwood J."/>
            <person name="James R."/>
            <person name="Johnson C."/>
            <person name="Johnson D."/>
            <person name="Joy A."/>
            <person name="Kay M."/>
            <person name="Kershaw J.K."/>
            <person name="Kibukawa M."/>
            <person name="Kimberley A.M."/>
            <person name="King A."/>
            <person name="Knights A.J."/>
            <person name="Lad H."/>
            <person name="Laird G."/>
            <person name="Lawlor S."/>
            <person name="Leongamornlert D.A."/>
            <person name="Lloyd D.M."/>
            <person name="Loveland J."/>
            <person name="Lovell J."/>
            <person name="Lush M.J."/>
            <person name="Lyne R."/>
            <person name="Martin S."/>
            <person name="Mashreghi-Mohammadi M."/>
            <person name="Matthews L."/>
            <person name="Matthews N.S.W."/>
            <person name="McLaren S."/>
            <person name="Milne S."/>
            <person name="Mistry S."/>
            <person name="Moore M.J.F."/>
            <person name="Nickerson T."/>
            <person name="O'Dell C.N."/>
            <person name="Oliver K."/>
            <person name="Palmeiri A."/>
            <person name="Palmer S.A."/>
            <person name="Parker A."/>
            <person name="Patel D."/>
            <person name="Pearce A.V."/>
            <person name="Peck A.I."/>
            <person name="Pelan S."/>
            <person name="Phelps K."/>
            <person name="Phillimore B.J."/>
            <person name="Plumb R."/>
            <person name="Rajan J."/>
            <person name="Raymond C."/>
            <person name="Rouse G."/>
            <person name="Saenphimmachak C."/>
            <person name="Sehra H.K."/>
            <person name="Sheridan E."/>
            <person name="Shownkeen R."/>
            <person name="Sims S."/>
            <person name="Skuce C.D."/>
            <person name="Smith M."/>
            <person name="Steward C."/>
            <person name="Subramanian S."/>
            <person name="Sycamore N."/>
            <person name="Tracey A."/>
            <person name="Tromans A."/>
            <person name="Van Helmond Z."/>
            <person name="Wall M."/>
            <person name="Wallis J.M."/>
            <person name="White S."/>
            <person name="Whitehead S.L."/>
            <person name="Wilkinson J.E."/>
            <person name="Willey D.L."/>
            <person name="Williams H."/>
            <person name="Wilming L."/>
            <person name="Wray P.W."/>
            <person name="Wu Z."/>
            <person name="Coulson A."/>
            <person name="Vaudin M."/>
            <person name="Sulston J.E."/>
            <person name="Durbin R.M."/>
            <person name="Hubbard T."/>
            <person name="Wooster R."/>
            <person name="Dunham I."/>
            <person name="Carter N.P."/>
            <person name="McVean G."/>
            <person name="Ross M.T."/>
            <person name="Harrow J."/>
            <person name="Olson M.V."/>
            <person name="Beck S."/>
            <person name="Rogers J."/>
            <person name="Bentley D.R."/>
        </authorList>
    </citation>
    <scope>NUCLEOTIDE SEQUENCE [LARGE SCALE GENOMIC DNA]</scope>
</reference>
<reference evidence="8" key="3">
    <citation type="journal article" date="2022" name="Proc. Natl. Acad. Sci. U.S.A.">
        <title>SPACA9 is a lumenal protein of human ciliary singlet and doublet microtubules.</title>
        <authorList>
            <person name="Gui M."/>
            <person name="Croft J.T."/>
            <person name="Zabeo D."/>
            <person name="Acharya V."/>
            <person name="Kollman J.M."/>
            <person name="Burgoyne T."/>
            <person name="Hoog J.L."/>
            <person name="Brown A."/>
        </authorList>
    </citation>
    <scope>STRUCTURE BY ELECTRON MICROSCOPY (3.60 ANGSTROMS)</scope>
    <scope>FUNCTION</scope>
    <scope>SUBCELLULAR LOCATION</scope>
    <scope>TISSUE SPECIFICITY</scope>
</reference>
<reference key="4">
    <citation type="journal article" date="2019" name="Brain">
        <title>Mutations in C1orf194, encoding a calcium regulator, cause dominant Charcot-Marie-Tooth disease.</title>
        <authorList>
            <person name="Sun S.C."/>
            <person name="Ma D."/>
            <person name="Li M.Y."/>
            <person name="Zhang R.X."/>
            <person name="Huang C."/>
            <person name="Huang H.J."/>
            <person name="Xie Y.Z."/>
            <person name="Wang Z.J."/>
            <person name="Liu J."/>
            <person name="Cai D.C."/>
            <person name="Liu C.X."/>
            <person name="Yang Q."/>
            <person name="Bao F.X."/>
            <person name="Gong X.L."/>
            <person name="Li J.R."/>
            <person name="Hui Z."/>
            <person name="Wei X.F."/>
            <person name="Zhong J.M."/>
            <person name="Zhou W.J."/>
            <person name="Shang X."/>
            <person name="Zhang C."/>
            <person name="Liu X.G."/>
            <person name="Tang B.S."/>
            <person name="Xiong F."/>
            <person name="Xu X.M."/>
        </authorList>
    </citation>
    <scope>SUBCELLULAR LOCATION</scope>
    <scope>VARIANTS ILE-28 AND ASN-122</scope>
    <scope>TISSUE SPECIFICITY</scope>
    <scope>CHARACTERIZATION OF VARIANTS ILE-28 AND ASN-122</scope>
    <scope>FUNCTION</scope>
    <scope>INVOLVEMENT IN CHAROT-MARIE-TOOTH DISEASE</scope>
</reference>
<comment type="function">
    <text evidence="1 2 4 5">Microtubule inner protein (MIP) part of the dynein-decorated doublet microtubules (DMTs) in cilia axoneme, which is required for motile cilia beating (PubMed:36191189). May play an important role for the maintenance of myelin-axon integrity (By similarity). May affect intracellular Ca(2+) homeostasis (PubMed:31199454).</text>
</comment>
<comment type="subunit">
    <text evidence="2">Microtubule inner protein component of sperm flagellar doublet microtubules.</text>
</comment>
<comment type="subcellular location">
    <subcellularLocation>
        <location evidence="4">Cytoplasm</location>
    </subcellularLocation>
    <subcellularLocation>
        <location evidence="2">Cytoplasm</location>
        <location evidence="2">Cytoskeleton</location>
        <location evidence="2">Flagellum axoneme</location>
    </subcellularLocation>
    <subcellularLocation>
        <location evidence="4">Cytoplasm</location>
        <location evidence="4">Cytoskeleton</location>
    </subcellularLocation>
    <subcellularLocation>
        <location evidence="5">Cytoplasm</location>
        <location evidence="5">Cytoskeleton</location>
        <location evidence="5">Cilium axoneme</location>
    </subcellularLocation>
</comment>
<comment type="alternative products">
    <event type="alternative splicing"/>
    <isoform>
        <id>Q5T5A4-1</id>
        <name>1</name>
        <sequence type="displayed"/>
    </isoform>
    <isoform>
        <id>Q5T5A4-2</id>
        <name>2</name>
        <sequence type="described" ref="VSP_027993"/>
    </isoform>
</comment>
<comment type="tissue specificity">
    <text evidence="4 5">Expressed in cerebrum, cerebellum, gastrocnemius muscle, spinal cord and lung tissues.</text>
</comment>
<comment type="disease">
    <text evidence="4">CFAP276 mutations may be the cause of Charcot-Marie-Tooth disease, a disorder of the peripheral nervous system, characterized by progressive weakness and atrophy, initially of the peroneal muscles and later of the distal muscles of the arms. Charcot-Marie-Tooth disease is classified in two main groups on the basis of electrophysiologic properties and histopathology: primary peripheral demyelinating neuropathies (designated CMT1 when they are dominantly inherited) and primary peripheral axonal neuropathies (CMT2). Demyelinating neuropathies are characterized by severely reduced nerve conduction velocities (less than 38 m/sec), segmental demyelination and remyelination with onion bulb formations on nerve biopsy, slowly progressive distal muscle atrophy and weakness, absent deep tendon reflexes, and hollow feet. Intermediate forms of Charcot-Marie-Tooth disease exist and are characterized by clinical and pathologic features intermediate between demyelinating and axonal peripheral neuropathies, and motor median nerve conduction velocities ranging from 25 to 45 m/sec.</text>
</comment>
<evidence type="ECO:0000250" key="1">
    <source>
        <dbReference type="UniProtKB" id="E1B9I5"/>
    </source>
</evidence>
<evidence type="ECO:0000250" key="2">
    <source>
        <dbReference type="UniProtKB" id="Q9DAD0"/>
    </source>
</evidence>
<evidence type="ECO:0000256" key="3">
    <source>
        <dbReference type="SAM" id="MobiDB-lite"/>
    </source>
</evidence>
<evidence type="ECO:0000269" key="4">
    <source>
    </source>
</evidence>
<evidence type="ECO:0000269" key="5">
    <source>
    </source>
</evidence>
<evidence type="ECO:0000303" key="6">
    <source>
    </source>
</evidence>
<evidence type="ECO:0000312" key="7">
    <source>
        <dbReference type="HGNC" id="HGNC:32331"/>
    </source>
</evidence>
<evidence type="ECO:0007744" key="8">
    <source>
        <dbReference type="PDB" id="7UNG"/>
    </source>
</evidence>
<keyword id="KW-0002">3D-structure</keyword>
<keyword id="KW-0025">Alternative splicing</keyword>
<keyword id="KW-0966">Cell projection</keyword>
<keyword id="KW-0144">Charcot-Marie-Tooth disease</keyword>
<keyword id="KW-0969">Cilium</keyword>
<keyword id="KW-0963">Cytoplasm</keyword>
<keyword id="KW-0206">Cytoskeleton</keyword>
<keyword id="KW-0225">Disease variant</keyword>
<keyword id="KW-0282">Flagellum</keyword>
<keyword id="KW-0523">Neurodegeneration</keyword>
<keyword id="KW-0622">Neuropathy</keyword>
<keyword id="KW-1267">Proteomics identification</keyword>
<keyword id="KW-1185">Reference proteome</keyword>
<accession>Q5T5A4</accession>
<accession>Q5T5A3</accession>
<dbReference type="EMBL" id="BM726900">
    <property type="status" value="NOT_ANNOTATED_CDS"/>
    <property type="molecule type" value="mRNA"/>
</dbReference>
<dbReference type="EMBL" id="AL356488">
    <property type="status" value="NOT_ANNOTATED_CDS"/>
    <property type="molecule type" value="Genomic_DNA"/>
</dbReference>
<dbReference type="EMBL" id="AL138933">
    <property type="status" value="NOT_ANNOTATED_CDS"/>
    <property type="molecule type" value="Genomic_DNA"/>
</dbReference>
<dbReference type="CCDS" id="CCDS41364.1">
    <molecule id="Q5T5A4-2"/>
</dbReference>
<dbReference type="CCDS" id="CCDS91016.1">
    <molecule id="Q5T5A4-1"/>
</dbReference>
<dbReference type="RefSeq" id="NP_001116433.1">
    <molecule id="Q5T5A4-2"/>
    <property type="nucleotide sequence ID" value="NM_001122961.3"/>
</dbReference>
<dbReference type="RefSeq" id="NP_001231954.1">
    <molecule id="Q5T5A4-1"/>
    <property type="nucleotide sequence ID" value="NM_001245025.3"/>
</dbReference>
<dbReference type="PDB" id="7UNG">
    <property type="method" value="EM"/>
    <property type="resolution" value="3.60 A"/>
    <property type="chains" value="q/r/s=1-169"/>
</dbReference>
<dbReference type="PDB" id="8J07">
    <property type="method" value="EM"/>
    <property type="resolution" value="4.10 A"/>
    <property type="chains" value="2U/2V/2W/2X/2Y/2Z=1-169"/>
</dbReference>
<dbReference type="PDBsum" id="7UNG"/>
<dbReference type="PDBsum" id="8J07"/>
<dbReference type="EMDB" id="EMD-26624"/>
<dbReference type="EMDB" id="EMD-35888"/>
<dbReference type="BioGRID" id="126029">
    <property type="interactions" value="1"/>
</dbReference>
<dbReference type="FunCoup" id="Q5T5A4">
    <property type="interactions" value="57"/>
</dbReference>
<dbReference type="STRING" id="9606.ENSP00000358965"/>
<dbReference type="GlyGen" id="Q5T5A4">
    <property type="glycosylation" value="1 site"/>
</dbReference>
<dbReference type="iPTMnet" id="Q5T5A4"/>
<dbReference type="PhosphoSitePlus" id="Q5T5A4"/>
<dbReference type="BioMuta" id="C1orf194"/>
<dbReference type="DMDM" id="74745049"/>
<dbReference type="MassIVE" id="Q5T5A4"/>
<dbReference type="PaxDb" id="9606-ENSP00000358965"/>
<dbReference type="PeptideAtlas" id="Q5T5A4"/>
<dbReference type="ProteomicsDB" id="64505">
    <molecule id="Q5T5A4-1"/>
</dbReference>
<dbReference type="ProteomicsDB" id="64506">
    <molecule id="Q5T5A4-2"/>
</dbReference>
<dbReference type="Antibodypedia" id="33746">
    <property type="antibodies" value="42 antibodies from 9 providers"/>
</dbReference>
<dbReference type="DNASU" id="127003"/>
<dbReference type="Ensembl" id="ENST00000369948.8">
    <molecule id="Q5T5A4-1"/>
    <property type="protein sequence ID" value="ENSP00000358964.3"/>
    <property type="gene ID" value="ENSG00000179902.13"/>
</dbReference>
<dbReference type="Ensembl" id="ENST00000369949.8">
    <molecule id="Q5T5A4-2"/>
    <property type="protein sequence ID" value="ENSP00000358965.4"/>
    <property type="gene ID" value="ENSG00000179902.13"/>
</dbReference>
<dbReference type="GeneID" id="127003"/>
<dbReference type="KEGG" id="hsa:127003"/>
<dbReference type="MANE-Select" id="ENST00000369948.8">
    <property type="protein sequence ID" value="ENSP00000358964.3"/>
    <property type="RefSeq nucleotide sequence ID" value="NM_001245025.3"/>
    <property type="RefSeq protein sequence ID" value="NP_001231954.1"/>
</dbReference>
<dbReference type="UCSC" id="uc009wev.4">
    <molecule id="Q5T5A4-1"/>
    <property type="organism name" value="human"/>
</dbReference>
<dbReference type="AGR" id="HGNC:32331"/>
<dbReference type="CTD" id="127003"/>
<dbReference type="DisGeNET" id="127003"/>
<dbReference type="GeneCards" id="CFAP276"/>
<dbReference type="HGNC" id="HGNC:32331">
    <property type="gene designation" value="CFAP276"/>
</dbReference>
<dbReference type="HPA" id="ENSG00000179902">
    <property type="expression patterns" value="Group enriched (choroid plexus, fallopian tube, testis)"/>
</dbReference>
<dbReference type="MalaCards" id="CFAP276"/>
<dbReference type="MIM" id="618682">
    <property type="type" value="gene"/>
</dbReference>
<dbReference type="neXtProt" id="NX_Q5T5A4"/>
<dbReference type="OpenTargets" id="ENSG00000179902"/>
<dbReference type="VEuPathDB" id="HostDB:ENSG00000179902"/>
<dbReference type="eggNOG" id="ENOG502S2J1">
    <property type="taxonomic scope" value="Eukaryota"/>
</dbReference>
<dbReference type="GeneTree" id="ENSGT01030000234625"/>
<dbReference type="HOGENOM" id="CLU_133894_0_0_1"/>
<dbReference type="InParanoid" id="Q5T5A4"/>
<dbReference type="OMA" id="QWINPKK"/>
<dbReference type="OrthoDB" id="10013535at2759"/>
<dbReference type="PAN-GO" id="Q5T5A4">
    <property type="GO annotations" value="3 GO annotations based on evolutionary models"/>
</dbReference>
<dbReference type="PhylomeDB" id="Q5T5A4"/>
<dbReference type="TreeFam" id="TF325898"/>
<dbReference type="PathwayCommons" id="Q5T5A4"/>
<dbReference type="BioGRID-ORCS" id="127003">
    <property type="hits" value="10 hits in 1111 CRISPR screens"/>
</dbReference>
<dbReference type="GenomeRNAi" id="127003"/>
<dbReference type="Pharos" id="Q5T5A4">
    <property type="development level" value="Tdark"/>
</dbReference>
<dbReference type="PRO" id="PR:Q5T5A4"/>
<dbReference type="Proteomes" id="UP000005640">
    <property type="component" value="Chromosome 1"/>
</dbReference>
<dbReference type="RNAct" id="Q5T5A4">
    <property type="molecule type" value="protein"/>
</dbReference>
<dbReference type="Bgee" id="ENSG00000179902">
    <property type="expression patterns" value="Expressed in right uterine tube and 117 other cell types or tissues"/>
</dbReference>
<dbReference type="ExpressionAtlas" id="Q5T5A4">
    <property type="expression patterns" value="baseline and differential"/>
</dbReference>
<dbReference type="GO" id="GO:0160112">
    <property type="term" value="C:axonemal B tubule inner sheath"/>
    <property type="evidence" value="ECO:0000250"/>
    <property type="project" value="UniProtKB"/>
</dbReference>
<dbReference type="GO" id="GO:0005879">
    <property type="term" value="C:axonemal microtubule"/>
    <property type="evidence" value="ECO:0000314"/>
    <property type="project" value="UniProtKB"/>
</dbReference>
<dbReference type="GO" id="GO:0005737">
    <property type="term" value="C:cytoplasm"/>
    <property type="evidence" value="ECO:0000314"/>
    <property type="project" value="UniProtKB"/>
</dbReference>
<dbReference type="GO" id="GO:0005856">
    <property type="term" value="C:cytoskeleton"/>
    <property type="evidence" value="ECO:0000314"/>
    <property type="project" value="UniProtKB"/>
</dbReference>
<dbReference type="GO" id="GO:0036126">
    <property type="term" value="C:sperm flagellum"/>
    <property type="evidence" value="ECO:0000250"/>
    <property type="project" value="UniProtKB"/>
</dbReference>
<dbReference type="GO" id="GO:0030317">
    <property type="term" value="P:flagellated sperm motility"/>
    <property type="evidence" value="ECO:0000250"/>
    <property type="project" value="UniProtKB"/>
</dbReference>
<dbReference type="InterPro" id="IPR022179">
    <property type="entry name" value="CFAP276"/>
</dbReference>
<dbReference type="Pfam" id="PF12494">
    <property type="entry name" value="DUF3695"/>
    <property type="match status" value="1"/>
</dbReference>
<name>CF276_HUMAN</name>
<feature type="chain" id="PRO_0000303065" description="Cilia- and flagella-associated protein 276">
    <location>
        <begin position="1"/>
        <end position="169"/>
    </location>
</feature>
<feature type="region of interest" description="Disordered" evidence="3">
    <location>
        <begin position="26"/>
        <end position="45"/>
    </location>
</feature>
<feature type="region of interest" description="Disordered" evidence="3">
    <location>
        <begin position="150"/>
        <end position="169"/>
    </location>
</feature>
<feature type="compositionally biased region" description="Polar residues" evidence="3">
    <location>
        <begin position="36"/>
        <end position="45"/>
    </location>
</feature>
<feature type="compositionally biased region" description="Basic and acidic residues" evidence="3">
    <location>
        <begin position="160"/>
        <end position="169"/>
    </location>
</feature>
<feature type="splice variant" id="VSP_027993" description="In isoform 2." evidence="6">
    <original>MPPTRDPFQQPTLDNDDSYLGELRASK</original>
    <variation>MERSPSRRRRLEEAP</variation>
    <location>
        <begin position="1"/>
        <end position="27"/>
    </location>
</feature>
<feature type="sequence variant" id="VAR_082033" description="Found in patients with an intermediate form of Charcot-Marie-Tooth disease; does not affect subcellular location; reduced protein expression; increased intracellular Ca(2+); dbSNP:rs1553246861." evidence="4">
    <original>K</original>
    <variation>I</variation>
    <location>
        <position position="28"/>
    </location>
</feature>
<feature type="sequence variant" id="VAR_082034" description="Found in patients with a form of Charcot-Marie-Tooth disease leading to demyelinating form; likely pathogenic; does not affect subcellular location; increased protein expression; increased aggregation in vesicles; increased intracellular Ca(2+); decreased mitochondrial Ca(2+); dbSNP:rs1553246716." evidence="4">
    <original>I</original>
    <variation>N</variation>
    <location>
        <position position="122"/>
    </location>
</feature>
<gene>
    <name evidence="7" type="primary">CFAP276</name>
    <name evidence="7" type="synonym">C1orf194</name>
</gene>
<proteinExistence type="evidence at protein level"/>